<gene>
    <name type="primary">TEKTIP1</name>
    <name type="ORF">QtsA-14935</name>
</gene>
<proteinExistence type="evidence at transcript level"/>
<keyword id="KW-0966">Cell projection</keyword>
<keyword id="KW-0969">Cilium</keyword>
<keyword id="KW-0963">Cytoplasm</keyword>
<keyword id="KW-0206">Cytoskeleton</keyword>
<keyword id="KW-0282">Flagellum</keyword>
<keyword id="KW-1185">Reference proteome</keyword>
<accession>A5LFW8</accession>
<sequence length="209" mass="24402">MQTLRREAARPYVPSGTLEASFPAPLYSDDYLSLEGPRWPLVIRQATRWKYTPMGRDAAGQLWYTGLTNSDTREAWYNLPLDPASPFREAYNRWHGCYQRREHTMPSAYTQHLRETAWHDPIIPAQYQVPSTRWGSTLWKDRPIRGKEYVINRNRYGVEPLWRASDYVPSLSAPQRPPGTTQNYREWGLEPYCPSTCQRPLPSSTPMPR</sequence>
<name>TKTI1_MACFA</name>
<organism>
    <name type="scientific">Macaca fascicularis</name>
    <name type="common">Crab-eating macaque</name>
    <name type="synonym">Cynomolgus monkey</name>
    <dbReference type="NCBI Taxonomy" id="9541"/>
    <lineage>
        <taxon>Eukaryota</taxon>
        <taxon>Metazoa</taxon>
        <taxon>Chordata</taxon>
        <taxon>Craniata</taxon>
        <taxon>Vertebrata</taxon>
        <taxon>Euteleostomi</taxon>
        <taxon>Mammalia</taxon>
        <taxon>Eutheria</taxon>
        <taxon>Euarchontoglires</taxon>
        <taxon>Primates</taxon>
        <taxon>Haplorrhini</taxon>
        <taxon>Catarrhini</taxon>
        <taxon>Cercopithecidae</taxon>
        <taxon>Cercopithecinae</taxon>
        <taxon>Macaca</taxon>
    </lineage>
</organism>
<feature type="chain" id="PRO_0000332196" description="Tektin bundle-interacting protein 1">
    <location>
        <begin position="1"/>
        <end position="209"/>
    </location>
</feature>
<evidence type="ECO:0000250" key="1">
    <source>
        <dbReference type="UniProtKB" id="A6H6Q4"/>
    </source>
</evidence>
<evidence type="ECO:0000250" key="2">
    <source>
        <dbReference type="UniProtKB" id="Q2M2T2"/>
    </source>
</evidence>
<protein>
    <recommendedName>
        <fullName>Tektin bundle-interacting protein 1</fullName>
    </recommendedName>
</protein>
<reference key="1">
    <citation type="submission" date="2005-06" db="EMBL/GenBank/DDBJ databases">
        <title>DNA sequences of macaque genes expressed in brain or testis and its evolutionary implications.</title>
        <authorList>
            <consortium name="International consortium for macaque cDNA sequencing and analysis"/>
        </authorList>
    </citation>
    <scope>NUCLEOTIDE SEQUENCE [LARGE SCALE MRNA]</scope>
    <source>
        <tissue>Testis</tissue>
    </source>
</reference>
<dbReference type="EMBL" id="AB168801">
    <property type="protein sequence ID" value="BAF63653.1"/>
    <property type="molecule type" value="mRNA"/>
</dbReference>
<dbReference type="RefSeq" id="NP_001272172.1">
    <property type="nucleotide sequence ID" value="NM_001285243.1"/>
</dbReference>
<dbReference type="STRING" id="9541.ENSMFAP00000031229"/>
<dbReference type="eggNOG" id="ENOG502S0K8">
    <property type="taxonomic scope" value="Eukaryota"/>
</dbReference>
<dbReference type="Proteomes" id="UP000233100">
    <property type="component" value="Unplaced"/>
</dbReference>
<dbReference type="GO" id="GO:0160111">
    <property type="term" value="C:axonemal A tubule inner sheath"/>
    <property type="evidence" value="ECO:0000250"/>
    <property type="project" value="UniProtKB"/>
</dbReference>
<dbReference type="GO" id="GO:0005879">
    <property type="term" value="C:axonemal microtubule"/>
    <property type="evidence" value="ECO:0000250"/>
    <property type="project" value="UniProtKB"/>
</dbReference>
<dbReference type="GO" id="GO:0036126">
    <property type="term" value="C:sperm flagellum"/>
    <property type="evidence" value="ECO:0000250"/>
    <property type="project" value="UniProtKB"/>
</dbReference>
<dbReference type="GO" id="GO:0030317">
    <property type="term" value="P:flagellated sperm motility"/>
    <property type="evidence" value="ECO:0000250"/>
    <property type="project" value="UniProtKB"/>
</dbReference>
<dbReference type="InterPro" id="IPR029203">
    <property type="entry name" value="TKTI1"/>
</dbReference>
<dbReference type="PANTHER" id="PTHR31254">
    <property type="entry name" value="HYPOTHETICAL PROTEIN LOC690617"/>
    <property type="match status" value="1"/>
</dbReference>
<dbReference type="PANTHER" id="PTHR31254:SF1">
    <property type="entry name" value="TEKTIN BUNDLE-INTERACTING PROTEIN 1"/>
    <property type="match status" value="1"/>
</dbReference>
<dbReference type="Pfam" id="PF15041">
    <property type="entry name" value="TKTI1"/>
    <property type="match status" value="1"/>
</dbReference>
<comment type="function">
    <text evidence="2">Microtubule inner protein (MIP) part of the dynein-decorated doublet microtubules (DMTs) in cilia axoneme, which is required for motile cilia beating. Located at the center of the tektin bundle where may function to recruit tektins or stabilize the bundle.</text>
</comment>
<comment type="subunit">
    <text evidence="1">Microtubule inner protein component of sperm flagellar doublet microtubules.</text>
</comment>
<comment type="subcellular location">
    <subcellularLocation>
        <location evidence="2">Cytoplasm</location>
        <location evidence="2">Cytoskeleton</location>
        <location evidence="2">Cilium axoneme</location>
    </subcellularLocation>
    <subcellularLocation>
        <location evidence="1">Cytoplasm</location>
        <location evidence="1">Cytoskeleton</location>
        <location evidence="1">Flagellum axoneme</location>
    </subcellularLocation>
</comment>